<reference key="1">
    <citation type="journal article" date="2000" name="Mamm. Genome">
        <title>Identification of the promoter, genomic structure, and mouse ortholog of LGI1.</title>
        <authorList>
            <person name="Somerville R.P.T."/>
            <person name="Chernova O."/>
            <person name="Liu S."/>
            <person name="Shoshan Y."/>
            <person name="Cowell J.K."/>
        </authorList>
    </citation>
    <scope>NUCLEOTIDE SEQUENCE [MRNA] (ISOFORM 1)</scope>
</reference>
<reference key="2">
    <citation type="journal article" date="2005" name="Science">
        <title>The transcriptional landscape of the mammalian genome.</title>
        <authorList>
            <person name="Carninci P."/>
            <person name="Kasukawa T."/>
            <person name="Katayama S."/>
            <person name="Gough J."/>
            <person name="Frith M.C."/>
            <person name="Maeda N."/>
            <person name="Oyama R."/>
            <person name="Ravasi T."/>
            <person name="Lenhard B."/>
            <person name="Wells C."/>
            <person name="Kodzius R."/>
            <person name="Shimokawa K."/>
            <person name="Bajic V.B."/>
            <person name="Brenner S.E."/>
            <person name="Batalov S."/>
            <person name="Forrest A.R."/>
            <person name="Zavolan M."/>
            <person name="Davis M.J."/>
            <person name="Wilming L.G."/>
            <person name="Aidinis V."/>
            <person name="Allen J.E."/>
            <person name="Ambesi-Impiombato A."/>
            <person name="Apweiler R."/>
            <person name="Aturaliya R.N."/>
            <person name="Bailey T.L."/>
            <person name="Bansal M."/>
            <person name="Baxter L."/>
            <person name="Beisel K.W."/>
            <person name="Bersano T."/>
            <person name="Bono H."/>
            <person name="Chalk A.M."/>
            <person name="Chiu K.P."/>
            <person name="Choudhary V."/>
            <person name="Christoffels A."/>
            <person name="Clutterbuck D.R."/>
            <person name="Crowe M.L."/>
            <person name="Dalla E."/>
            <person name="Dalrymple B.P."/>
            <person name="de Bono B."/>
            <person name="Della Gatta G."/>
            <person name="di Bernardo D."/>
            <person name="Down T."/>
            <person name="Engstrom P."/>
            <person name="Fagiolini M."/>
            <person name="Faulkner G."/>
            <person name="Fletcher C.F."/>
            <person name="Fukushima T."/>
            <person name="Furuno M."/>
            <person name="Futaki S."/>
            <person name="Gariboldi M."/>
            <person name="Georgii-Hemming P."/>
            <person name="Gingeras T.R."/>
            <person name="Gojobori T."/>
            <person name="Green R.E."/>
            <person name="Gustincich S."/>
            <person name="Harbers M."/>
            <person name="Hayashi Y."/>
            <person name="Hensch T.K."/>
            <person name="Hirokawa N."/>
            <person name="Hill D."/>
            <person name="Huminiecki L."/>
            <person name="Iacono M."/>
            <person name="Ikeo K."/>
            <person name="Iwama A."/>
            <person name="Ishikawa T."/>
            <person name="Jakt M."/>
            <person name="Kanapin A."/>
            <person name="Katoh M."/>
            <person name="Kawasawa Y."/>
            <person name="Kelso J."/>
            <person name="Kitamura H."/>
            <person name="Kitano H."/>
            <person name="Kollias G."/>
            <person name="Krishnan S.P."/>
            <person name="Kruger A."/>
            <person name="Kummerfeld S.K."/>
            <person name="Kurochkin I.V."/>
            <person name="Lareau L.F."/>
            <person name="Lazarevic D."/>
            <person name="Lipovich L."/>
            <person name="Liu J."/>
            <person name="Liuni S."/>
            <person name="McWilliam S."/>
            <person name="Madan Babu M."/>
            <person name="Madera M."/>
            <person name="Marchionni L."/>
            <person name="Matsuda H."/>
            <person name="Matsuzawa S."/>
            <person name="Miki H."/>
            <person name="Mignone F."/>
            <person name="Miyake S."/>
            <person name="Morris K."/>
            <person name="Mottagui-Tabar S."/>
            <person name="Mulder N."/>
            <person name="Nakano N."/>
            <person name="Nakauchi H."/>
            <person name="Ng P."/>
            <person name="Nilsson R."/>
            <person name="Nishiguchi S."/>
            <person name="Nishikawa S."/>
            <person name="Nori F."/>
            <person name="Ohara O."/>
            <person name="Okazaki Y."/>
            <person name="Orlando V."/>
            <person name="Pang K.C."/>
            <person name="Pavan W.J."/>
            <person name="Pavesi G."/>
            <person name="Pesole G."/>
            <person name="Petrovsky N."/>
            <person name="Piazza S."/>
            <person name="Reed J."/>
            <person name="Reid J.F."/>
            <person name="Ring B.Z."/>
            <person name="Ringwald M."/>
            <person name="Rost B."/>
            <person name="Ruan Y."/>
            <person name="Salzberg S.L."/>
            <person name="Sandelin A."/>
            <person name="Schneider C."/>
            <person name="Schoenbach C."/>
            <person name="Sekiguchi K."/>
            <person name="Semple C.A."/>
            <person name="Seno S."/>
            <person name="Sessa L."/>
            <person name="Sheng Y."/>
            <person name="Shibata Y."/>
            <person name="Shimada H."/>
            <person name="Shimada K."/>
            <person name="Silva D."/>
            <person name="Sinclair B."/>
            <person name="Sperling S."/>
            <person name="Stupka E."/>
            <person name="Sugiura K."/>
            <person name="Sultana R."/>
            <person name="Takenaka Y."/>
            <person name="Taki K."/>
            <person name="Tammoja K."/>
            <person name="Tan S.L."/>
            <person name="Tang S."/>
            <person name="Taylor M.S."/>
            <person name="Tegner J."/>
            <person name="Teichmann S.A."/>
            <person name="Ueda H.R."/>
            <person name="van Nimwegen E."/>
            <person name="Verardo R."/>
            <person name="Wei C.L."/>
            <person name="Yagi K."/>
            <person name="Yamanishi H."/>
            <person name="Zabarovsky E."/>
            <person name="Zhu S."/>
            <person name="Zimmer A."/>
            <person name="Hide W."/>
            <person name="Bult C."/>
            <person name="Grimmond S.M."/>
            <person name="Teasdale R.D."/>
            <person name="Liu E.T."/>
            <person name="Brusic V."/>
            <person name="Quackenbush J."/>
            <person name="Wahlestedt C."/>
            <person name="Mattick J.S."/>
            <person name="Hume D.A."/>
            <person name="Kai C."/>
            <person name="Sasaki D."/>
            <person name="Tomaru Y."/>
            <person name="Fukuda S."/>
            <person name="Kanamori-Katayama M."/>
            <person name="Suzuki M."/>
            <person name="Aoki J."/>
            <person name="Arakawa T."/>
            <person name="Iida J."/>
            <person name="Imamura K."/>
            <person name="Itoh M."/>
            <person name="Kato T."/>
            <person name="Kawaji H."/>
            <person name="Kawagashira N."/>
            <person name="Kawashima T."/>
            <person name="Kojima M."/>
            <person name="Kondo S."/>
            <person name="Konno H."/>
            <person name="Nakano K."/>
            <person name="Ninomiya N."/>
            <person name="Nishio T."/>
            <person name="Okada M."/>
            <person name="Plessy C."/>
            <person name="Shibata K."/>
            <person name="Shiraki T."/>
            <person name="Suzuki S."/>
            <person name="Tagami M."/>
            <person name="Waki K."/>
            <person name="Watahiki A."/>
            <person name="Okamura-Oho Y."/>
            <person name="Suzuki H."/>
            <person name="Kawai J."/>
            <person name="Hayashizaki Y."/>
        </authorList>
    </citation>
    <scope>NUCLEOTIDE SEQUENCE [LARGE SCALE MRNA] (ISOFORM 1)</scope>
    <source>
        <strain>C57BL/6J</strain>
        <tissue>Brain</tissue>
    </source>
</reference>
<reference key="3">
    <citation type="journal article" date="2004" name="Genome Res.">
        <title>The status, quality, and expansion of the NIH full-length cDNA project: the Mammalian Gene Collection (MGC).</title>
        <authorList>
            <consortium name="The MGC Project Team"/>
        </authorList>
    </citation>
    <scope>NUCLEOTIDE SEQUENCE [LARGE SCALE MRNA] (ISOFORM 1)</scope>
    <source>
        <strain>C57BL/6J</strain>
        <tissue>Brain</tissue>
    </source>
</reference>
<reference evidence="12" key="4">
    <citation type="journal article" date="2009" name="PLoS Biol.">
        <title>Lineage-specific biology revealed by a finished genome assembly of the mouse.</title>
        <authorList>
            <person name="Church D.M."/>
            <person name="Goodstadt L."/>
            <person name="Hillier L.W."/>
            <person name="Zody M.C."/>
            <person name="Goldstein S."/>
            <person name="She X."/>
            <person name="Bult C.J."/>
            <person name="Agarwala R."/>
            <person name="Cherry J.L."/>
            <person name="DiCuccio M."/>
            <person name="Hlavina W."/>
            <person name="Kapustin Y."/>
            <person name="Meric P."/>
            <person name="Maglott D."/>
            <person name="Birtle Z."/>
            <person name="Marques A.C."/>
            <person name="Graves T."/>
            <person name="Zhou S."/>
            <person name="Teague B."/>
            <person name="Potamousis K."/>
            <person name="Churas C."/>
            <person name="Place M."/>
            <person name="Herschleb J."/>
            <person name="Runnheim R."/>
            <person name="Forrest D."/>
            <person name="Amos-Landgraf J."/>
            <person name="Schwartz D.C."/>
            <person name="Cheng Z."/>
            <person name="Lindblad-Toh K."/>
            <person name="Eichler E.E."/>
            <person name="Ponting C.P."/>
        </authorList>
    </citation>
    <scope>NUCLEOTIDE SEQUENCE [LARGE SCALE GENOMIC DNA] (ISOFORM 2)</scope>
    <source>
        <strain evidence="12">C57BL/6J</strain>
    </source>
</reference>
<reference key="5">
    <citation type="submission" date="2007-04" db="UniProtKB">
        <authorList>
            <person name="Lubec G."/>
            <person name="Kang S.U."/>
        </authorList>
    </citation>
    <scope>PROTEIN SEQUENCE OF 161-171 AND 442-450</scope>
    <scope>IDENTIFICATION BY MASS SPECTROMETRY</scope>
    <source>
        <strain>C57BL/6J</strain>
        <tissue>Brain</tissue>
    </source>
</reference>
<reference key="6">
    <citation type="journal article" date="2005" name="Hum. Mol. Genet.">
        <title>ADPEAF mutations reduce levels of secreted LGI1, a putative tumor suppressor protein linked to epilepsy.</title>
        <authorList>
            <person name="Senechal K.R."/>
            <person name="Thaller C."/>
            <person name="Noebels J.L."/>
        </authorList>
    </citation>
    <scope>SUBCELLULAR LOCATION</scope>
</reference>
<reference key="7">
    <citation type="journal article" date="2006" name="J. Neurochem.">
        <title>The LGI1/epitempin gene encodes two protein isoforms differentially expressed in human brain.</title>
        <authorList>
            <person name="Furlan S."/>
            <person name="Roncaroli F."/>
            <person name="Forner F."/>
            <person name="Vitiello L."/>
            <person name="Calabria E."/>
            <person name="Piquer-Sirerol S."/>
            <person name="Valle G."/>
            <person name="Perez-Tur J."/>
            <person name="Michelucci R."/>
            <person name="Nobile C."/>
        </authorList>
    </citation>
    <scope>IDENTIFICATION BY MASS SPECTROMETRY</scope>
    <scope>ALTERNATIVE SPLICING</scope>
    <scope>SUBCELLULAR LOCATION (ISOFORMS 1 AND 2)</scope>
    <scope>TISSUE SPECIFICITY</scope>
</reference>
<reference key="8">
    <citation type="journal article" date="2006" name="Mol. Cell. Proteomics">
        <title>Comprehensive identification of phosphorylation sites in postsynaptic density preparations.</title>
        <authorList>
            <person name="Trinidad J.C."/>
            <person name="Specht C.G."/>
            <person name="Thalhammer A."/>
            <person name="Schoepfer R."/>
            <person name="Burlingame A.L."/>
        </authorList>
    </citation>
    <scope>IDENTIFICATION BY MASS SPECTROMETRY [LARGE SCALE ANALYSIS] (ISOFORMS 1 AND 2)</scope>
    <source>
        <tissue>Brain</tissue>
    </source>
</reference>
<reference key="9">
    <citation type="journal article" date="2008" name="Int. J. Biol. Sci.">
        <title>LGI1 and LGI4 bind to ADAM22, ADAM23 and ADAM11.</title>
        <authorList>
            <person name="Sagane K."/>
            <person name="Ishihama Y."/>
            <person name="Sugimoto H."/>
        </authorList>
    </citation>
    <scope>INTERACTION WITH ADAM11; ADAM22 AND ADAM23</scope>
</reference>
<reference key="10">
    <citation type="journal article" date="2010" name="Brain Res.">
        <title>Regional distribution of the leucine-rich glioma inactivated (LGI) gene family transcripts in the adult mouse brain.</title>
        <authorList>
            <person name="Herranz-Perez V."/>
            <person name="Olucha-Bordonau F.E."/>
            <person name="Morante-Redolat J.M."/>
            <person name="Perez-Tur J."/>
        </authorList>
    </citation>
    <scope>TISSUE SPECIFICITY</scope>
</reference>
<reference key="11">
    <citation type="journal article" date="2010" name="Cell">
        <title>A tissue-specific atlas of mouse protein phosphorylation and expression.</title>
        <authorList>
            <person name="Huttlin E.L."/>
            <person name="Jedrychowski M.P."/>
            <person name="Elias J.E."/>
            <person name="Goswami T."/>
            <person name="Rad R."/>
            <person name="Beausoleil S.A."/>
            <person name="Villen J."/>
            <person name="Haas W."/>
            <person name="Sowa M.E."/>
            <person name="Gygi S.P."/>
        </authorList>
    </citation>
    <scope>IDENTIFICATION BY MASS SPECTROMETRY [LARGE SCALE ANALYSIS] (ISOFORMS 1 AND 2)</scope>
    <source>
        <tissue>Brain</tissue>
    </source>
</reference>
<reference key="12">
    <citation type="journal article" date="2015" name="J. Neurosci.">
        <title>Selective Loss of Presynaptic Potassium Channel Clusters at the Cerebellar Basket Cell Terminal Pinceau in Adam11 Mutants Reveals Their Role in Ephaptic Control of Purkinje Cell Firing.</title>
        <authorList>
            <person name="Kole M.J."/>
            <person name="Qian J."/>
            <person name="Waase M.P."/>
            <person name="Klassen T.L."/>
            <person name="Chen T.T."/>
            <person name="Augustine G.J."/>
            <person name="Noebels J.L."/>
        </authorList>
    </citation>
    <scope>SUBCELLULAR LOCATION</scope>
    <scope>TISSUE SPECIFICITY</scope>
</reference>
<name>LGI1_MOUSE</name>
<feature type="signal peptide" evidence="4">
    <location>
        <begin position="1"/>
        <end position="34"/>
    </location>
</feature>
<feature type="chain" id="PRO_0000017706" description="Leucine-rich glioma-inactivated protein 1">
    <location>
        <begin position="35"/>
        <end position="557"/>
    </location>
</feature>
<feature type="domain" description="LRRNT">
    <location>
        <begin position="35"/>
        <end position="72"/>
    </location>
</feature>
<feature type="repeat" description="LRR 1">
    <location>
        <begin position="92"/>
        <end position="113"/>
    </location>
</feature>
<feature type="repeat" description="LRR 2">
    <location>
        <begin position="116"/>
        <end position="137"/>
    </location>
</feature>
<feature type="repeat" description="LRR 3">
    <location>
        <begin position="140"/>
        <end position="161"/>
    </location>
</feature>
<feature type="domain" description="LRRCT">
    <location>
        <begin position="173"/>
        <end position="223"/>
    </location>
</feature>
<feature type="repeat" description="EAR 1" evidence="5">
    <location>
        <begin position="225"/>
        <end position="267"/>
    </location>
</feature>
<feature type="repeat" description="EAR 2" evidence="5">
    <location>
        <begin position="271"/>
        <end position="313"/>
    </location>
</feature>
<feature type="repeat" description="EAR 3" evidence="5">
    <location>
        <begin position="317"/>
        <end position="364"/>
    </location>
</feature>
<feature type="repeat" description="EAR 4" evidence="5">
    <location>
        <begin position="366"/>
        <end position="415"/>
    </location>
</feature>
<feature type="repeat" description="EAR 5" evidence="5">
    <location>
        <begin position="419"/>
        <end position="462"/>
    </location>
</feature>
<feature type="repeat" description="EAR 6" evidence="5">
    <location>
        <begin position="464"/>
        <end position="506"/>
    </location>
</feature>
<feature type="repeat" description="EAR 7" evidence="5">
    <location>
        <begin position="510"/>
        <end position="552"/>
    </location>
</feature>
<feature type="glycosylation site" description="N-linked (GlcNAc...) asparagine" evidence="4">
    <location>
        <position position="192"/>
    </location>
</feature>
<feature type="glycosylation site" description="N-linked (GlcNAc...) asparagine" evidence="4">
    <location>
        <position position="277"/>
    </location>
</feature>
<feature type="glycosylation site" description="N-linked (GlcNAc...) asparagine" evidence="4">
    <location>
        <position position="422"/>
    </location>
</feature>
<feature type="splice variant" id="VSP_061731" description="In isoform 2.">
    <original>GTSTVVCKPIVI</original>
    <variation>VLRETRRFTNMS</variation>
    <location>
        <begin position="280"/>
        <end position="291"/>
    </location>
</feature>
<feature type="splice variant" id="VSP_061732" description="In isoform 2.">
    <location>
        <begin position="292"/>
        <end position="557"/>
    </location>
</feature>
<feature type="strand" evidence="13">
    <location>
        <begin position="44"/>
        <end position="48"/>
    </location>
</feature>
<feature type="strand" evidence="13">
    <location>
        <begin position="50"/>
        <end position="57"/>
    </location>
</feature>
<feature type="strand" evidence="13">
    <location>
        <begin position="71"/>
        <end position="76"/>
    </location>
</feature>
<feature type="turn" evidence="13">
    <location>
        <begin position="84"/>
        <end position="89"/>
    </location>
</feature>
<feature type="strand" evidence="13">
    <location>
        <begin position="94"/>
        <end position="100"/>
    </location>
</feature>
<feature type="strand" evidence="13">
    <location>
        <begin position="102"/>
        <end position="106"/>
    </location>
</feature>
<feature type="turn" evidence="13">
    <location>
        <begin position="108"/>
        <end position="113"/>
    </location>
</feature>
<feature type="strand" evidence="13">
    <location>
        <begin position="119"/>
        <end position="124"/>
    </location>
</feature>
<feature type="strand" evidence="13">
    <location>
        <begin position="126"/>
        <end position="130"/>
    </location>
</feature>
<feature type="turn" evidence="13">
    <location>
        <begin position="132"/>
        <end position="137"/>
    </location>
</feature>
<feature type="strand" evidence="13">
    <location>
        <begin position="143"/>
        <end position="145"/>
    </location>
</feature>
<feature type="turn" evidence="13">
    <location>
        <begin position="156"/>
        <end position="161"/>
    </location>
</feature>
<feature type="strand" evidence="13">
    <location>
        <begin position="167"/>
        <end position="169"/>
    </location>
</feature>
<feature type="helix" evidence="13">
    <location>
        <begin position="179"/>
        <end position="181"/>
    </location>
</feature>
<feature type="helix" evidence="13">
    <location>
        <begin position="182"/>
        <end position="190"/>
    </location>
</feature>
<feature type="strand" evidence="13">
    <location>
        <begin position="192"/>
        <end position="195"/>
    </location>
</feature>
<feature type="strand" evidence="13">
    <location>
        <begin position="199"/>
        <end position="203"/>
    </location>
</feature>
<feature type="turn" evidence="13">
    <location>
        <begin position="204"/>
        <end position="208"/>
    </location>
</feature>
<feature type="turn" evidence="13">
    <location>
        <begin position="211"/>
        <end position="213"/>
    </location>
</feature>
<feature type="helix" evidence="13">
    <location>
        <begin position="216"/>
        <end position="219"/>
    </location>
</feature>
<comment type="function">
    <text evidence="1">Regulates voltage-gated potassium channels assembled from KCNA1, KCNA4 and KCNAB1. It slows down channel inactivation by precluding channel closure mediated by the KCNAB1 subunit. Ligand for ADAM22 that positively regulates synaptic transmission mediated by AMPA-type glutamate receptors. Plays a role in suppressing the production of MMP1/3 through the phosphatidylinositol 3-kinase/ERK pathway (By similarity).</text>
</comment>
<comment type="subunit">
    <text evidence="1 8">Oligomer (By similarity). Interacts with KCNA1 within a complex containing KCNA1, KCNA4 and KCNAB1 (By similarity). Part of a complex containing ADAM22, DLG4/PSD95 and CACNG2 (stargazin) (By similarity). Can bind to ADAM11 and ADAM23.</text>
</comment>
<comment type="subcellular location">
    <subcellularLocation>
        <location evidence="6">Secreted</location>
    </subcellularLocation>
    <subcellularLocation>
        <location evidence="3">Synapse</location>
    </subcellularLocation>
    <subcellularLocation>
        <location evidence="10">Cytoplasm</location>
    </subcellularLocation>
</comment>
<comment type="subcellular location">
    <molecule>Isoform 1</molecule>
    <subcellularLocation>
        <location evidence="7">Cytoplasm</location>
    </subcellularLocation>
    <subcellularLocation>
        <location evidence="2">Golgi apparatus</location>
    </subcellularLocation>
    <subcellularLocation>
        <location evidence="2">Secreted</location>
    </subcellularLocation>
</comment>
<comment type="subcellular location">
    <molecule>Isoform 2</molecule>
    <subcellularLocation>
        <location evidence="7">Cytoplasm</location>
    </subcellularLocation>
    <subcellularLocation>
        <location evidence="2">Endoplasmic reticulum</location>
    </subcellularLocation>
</comment>
<comment type="alternative products">
    <event type="alternative splicing"/>
    <isoform>
        <id>Q9JIA1-1</id>
        <name>1</name>
        <sequence type="displayed"/>
    </isoform>
    <isoform>
        <id>Q9JIA1-3</id>
        <name>2</name>
        <sequence type="described" ref="VSP_061731 VSP_061732"/>
    </isoform>
</comment>
<comment type="tissue specificity">
    <text evidence="7 9 10">Expressed in the brain (at protein level) (PubMed:16787412). Expressed in cerebellar cortex basket cell terminals (at protein level) (PubMed:26269648). Highly expressed in the dentate gyrus and CA3 field of the hippocampus.</text>
</comment>
<comment type="PTM">
    <text evidence="1">Glycosylated.</text>
</comment>
<proteinExistence type="evidence at protein level"/>
<gene>
    <name evidence="11" type="primary">Lgi1</name>
</gene>
<dbReference type="EMBL" id="AF246818">
    <property type="protein sequence ID" value="AAF87077.1"/>
    <property type="molecule type" value="mRNA"/>
</dbReference>
<dbReference type="EMBL" id="AK045443">
    <property type="protein sequence ID" value="BAC32370.1"/>
    <property type="molecule type" value="mRNA"/>
</dbReference>
<dbReference type="EMBL" id="BC066090">
    <property type="protein sequence ID" value="AAH66090.1"/>
    <property type="molecule type" value="mRNA"/>
</dbReference>
<dbReference type="CCDS" id="CCDS29786.1">
    <molecule id="Q9JIA1-1"/>
</dbReference>
<dbReference type="RefSeq" id="NP_064674.1">
    <molecule id="Q9JIA1-1"/>
    <property type="nucleotide sequence ID" value="NM_020278.3"/>
</dbReference>
<dbReference type="PDB" id="8HPW">
    <property type="method" value="X-ray"/>
    <property type="resolution" value="2.39 A"/>
    <property type="chains" value="A/B/C=39-223"/>
</dbReference>
<dbReference type="PDB" id="8HPX">
    <property type="method" value="X-ray"/>
    <property type="resolution" value="3.68 A"/>
    <property type="chains" value="A/B=39-223"/>
</dbReference>
<dbReference type="PDBsum" id="8HPW"/>
<dbReference type="PDBsum" id="8HPX"/>
<dbReference type="SMR" id="Q9JIA1"/>
<dbReference type="BioGRID" id="208189">
    <property type="interactions" value="10"/>
</dbReference>
<dbReference type="FunCoup" id="Q9JIA1">
    <property type="interactions" value="457"/>
</dbReference>
<dbReference type="IntAct" id="Q9JIA1">
    <property type="interactions" value="5"/>
</dbReference>
<dbReference type="MINT" id="Q9JIA1"/>
<dbReference type="STRING" id="10090.ENSMUSP00000143128"/>
<dbReference type="GlyConnect" id="2464">
    <property type="glycosylation" value="5 N-Linked glycans (1 site)"/>
</dbReference>
<dbReference type="GlyCosmos" id="Q9JIA1">
    <property type="glycosylation" value="3 sites, 5 glycans"/>
</dbReference>
<dbReference type="GlyGen" id="Q9JIA1">
    <property type="glycosylation" value="4 sites, 7 N-linked glycans (2 sites), 1 O-linked glycan (1 site)"/>
</dbReference>
<dbReference type="iPTMnet" id="Q9JIA1"/>
<dbReference type="PhosphoSitePlus" id="Q9JIA1"/>
<dbReference type="SwissPalm" id="Q9JIA1"/>
<dbReference type="PaxDb" id="10090-ENSMUSP00000084507"/>
<dbReference type="PeptideAtlas" id="Q9JIA1"/>
<dbReference type="ProteomicsDB" id="286188">
    <molecule id="Q9JIA1-1"/>
</dbReference>
<dbReference type="ProteomicsDB" id="314486"/>
<dbReference type="ABCD" id="Q9JIA1">
    <property type="antibodies" value="1 sequenced antibody"/>
</dbReference>
<dbReference type="Antibodypedia" id="30497">
    <property type="antibodies" value="274 antibodies from 35 providers"/>
</dbReference>
<dbReference type="DNASU" id="56839"/>
<dbReference type="Ensembl" id="ENSMUST00000198045.5">
    <molecule id="Q9JIA1-3"/>
    <property type="protein sequence ID" value="ENSMUSP00000143292.2"/>
    <property type="gene ID" value="ENSMUSG00000067242.12"/>
</dbReference>
<dbReference type="Ensembl" id="ENSMUST00000198518.5">
    <molecule id="Q9JIA1-1"/>
    <property type="protein sequence ID" value="ENSMUSP00000143128.2"/>
    <property type="gene ID" value="ENSMUSG00000067242.12"/>
</dbReference>
<dbReference type="GeneID" id="56839"/>
<dbReference type="KEGG" id="mmu:56839"/>
<dbReference type="UCSC" id="uc008hji.1">
    <molecule id="Q9JIA1-1"/>
    <property type="organism name" value="mouse"/>
</dbReference>
<dbReference type="AGR" id="MGI:1861691"/>
<dbReference type="CTD" id="9211"/>
<dbReference type="MGI" id="MGI:1861691">
    <property type="gene designation" value="Lgi1"/>
</dbReference>
<dbReference type="VEuPathDB" id="HostDB:ENSMUSG00000067242"/>
<dbReference type="eggNOG" id="ENOG502REXX">
    <property type="taxonomic scope" value="Eukaryota"/>
</dbReference>
<dbReference type="GeneTree" id="ENSGT00940000159793"/>
<dbReference type="HOGENOM" id="CLU_2721524_0_0_1"/>
<dbReference type="InParanoid" id="Q9JIA1"/>
<dbReference type="OMA" id="VEMNFRN"/>
<dbReference type="OrthoDB" id="6066926at2759"/>
<dbReference type="PhylomeDB" id="Q9JIA1"/>
<dbReference type="TreeFam" id="TF333155"/>
<dbReference type="Reactome" id="R-MMU-5682910">
    <property type="pathway name" value="LGI-ADAM interactions"/>
</dbReference>
<dbReference type="BioGRID-ORCS" id="56839">
    <property type="hits" value="1 hit in 76 CRISPR screens"/>
</dbReference>
<dbReference type="CD-CODE" id="CE726F99">
    <property type="entry name" value="Postsynaptic density"/>
</dbReference>
<dbReference type="ChiTaRS" id="Lgi1">
    <property type="organism name" value="mouse"/>
</dbReference>
<dbReference type="PRO" id="PR:Q9JIA1"/>
<dbReference type="Proteomes" id="UP000000589">
    <property type="component" value="Chromosome 19"/>
</dbReference>
<dbReference type="RNAct" id="Q9JIA1">
    <property type="molecule type" value="protein"/>
</dbReference>
<dbReference type="Bgee" id="ENSMUSG00000067242">
    <property type="expression patterns" value="Expressed in dentate gyrus of hippocampal formation and 127 other cell types or tissues"/>
</dbReference>
<dbReference type="ExpressionAtlas" id="Q9JIA1">
    <property type="expression patterns" value="baseline and differential"/>
</dbReference>
<dbReference type="GO" id="GO:0043194">
    <property type="term" value="C:axon initial segment"/>
    <property type="evidence" value="ECO:0007669"/>
    <property type="project" value="Ensembl"/>
</dbReference>
<dbReference type="GO" id="GO:0005737">
    <property type="term" value="C:cytoplasm"/>
    <property type="evidence" value="ECO:0000314"/>
    <property type="project" value="UniProtKB"/>
</dbReference>
<dbReference type="GO" id="GO:0030425">
    <property type="term" value="C:dendrite"/>
    <property type="evidence" value="ECO:0007669"/>
    <property type="project" value="Ensembl"/>
</dbReference>
<dbReference type="GO" id="GO:0005783">
    <property type="term" value="C:endoplasmic reticulum"/>
    <property type="evidence" value="ECO:0007669"/>
    <property type="project" value="UniProtKB-SubCell"/>
</dbReference>
<dbReference type="GO" id="GO:0005615">
    <property type="term" value="C:extracellular space"/>
    <property type="evidence" value="ECO:0000314"/>
    <property type="project" value="UniProtKB"/>
</dbReference>
<dbReference type="GO" id="GO:0098978">
    <property type="term" value="C:glutamatergic synapse"/>
    <property type="evidence" value="ECO:0000314"/>
    <property type="project" value="SynGO"/>
</dbReference>
<dbReference type="GO" id="GO:0005794">
    <property type="term" value="C:Golgi apparatus"/>
    <property type="evidence" value="ECO:0007669"/>
    <property type="project" value="UniProtKB-SubCell"/>
</dbReference>
<dbReference type="GO" id="GO:0043083">
    <property type="term" value="C:synaptic cleft"/>
    <property type="evidence" value="ECO:0000314"/>
    <property type="project" value="SynGO"/>
</dbReference>
<dbReference type="GO" id="GO:0048018">
    <property type="term" value="F:receptor ligand activity"/>
    <property type="evidence" value="ECO:0000314"/>
    <property type="project" value="UniProtKB"/>
</dbReference>
<dbReference type="GO" id="GO:0007411">
    <property type="term" value="P:axon guidance"/>
    <property type="evidence" value="ECO:0007669"/>
    <property type="project" value="Ensembl"/>
</dbReference>
<dbReference type="GO" id="GO:0099645">
    <property type="term" value="P:neurotransmitter receptor localization to postsynaptic specialization membrane"/>
    <property type="evidence" value="ECO:0000314"/>
    <property type="project" value="SynGO"/>
</dbReference>
<dbReference type="GO" id="GO:0030307">
    <property type="term" value="P:positive regulation of cell growth"/>
    <property type="evidence" value="ECO:0007669"/>
    <property type="project" value="Ensembl"/>
</dbReference>
<dbReference type="GO" id="GO:0050806">
    <property type="term" value="P:positive regulation of synaptic transmission"/>
    <property type="evidence" value="ECO:0000314"/>
    <property type="project" value="UniProtKB"/>
</dbReference>
<dbReference type="FunFam" id="3.80.10.10:FF:000017">
    <property type="entry name" value="leucine-rich repeat LGI family member 3"/>
    <property type="match status" value="1"/>
</dbReference>
<dbReference type="Gene3D" id="3.80.10.10">
    <property type="entry name" value="Ribonuclease Inhibitor"/>
    <property type="match status" value="1"/>
</dbReference>
<dbReference type="InterPro" id="IPR000483">
    <property type="entry name" value="Cys-rich_flank_reg_C"/>
</dbReference>
<dbReference type="InterPro" id="IPR009039">
    <property type="entry name" value="EAR"/>
</dbReference>
<dbReference type="InterPro" id="IPR005492">
    <property type="entry name" value="EPTP"/>
</dbReference>
<dbReference type="InterPro" id="IPR001611">
    <property type="entry name" value="Leu-rich_rpt"/>
</dbReference>
<dbReference type="InterPro" id="IPR003591">
    <property type="entry name" value="Leu-rich_rpt_typical-subtyp"/>
</dbReference>
<dbReference type="InterPro" id="IPR051295">
    <property type="entry name" value="LGI_related"/>
</dbReference>
<dbReference type="InterPro" id="IPR032675">
    <property type="entry name" value="LRR_dom_sf"/>
</dbReference>
<dbReference type="PANTHER" id="PTHR24367:SF17">
    <property type="entry name" value="LEUCINE-RICH GLIOMA-INACTIVATED PROTEIN 1"/>
    <property type="match status" value="1"/>
</dbReference>
<dbReference type="PANTHER" id="PTHR24367">
    <property type="entry name" value="LEUCINE-RICH REPEAT-CONTAINING PROTEIN"/>
    <property type="match status" value="1"/>
</dbReference>
<dbReference type="Pfam" id="PF03736">
    <property type="entry name" value="EPTP"/>
    <property type="match status" value="7"/>
</dbReference>
<dbReference type="Pfam" id="PF13855">
    <property type="entry name" value="LRR_8"/>
    <property type="match status" value="1"/>
</dbReference>
<dbReference type="SMART" id="SM00369">
    <property type="entry name" value="LRR_TYP"/>
    <property type="match status" value="3"/>
</dbReference>
<dbReference type="SMART" id="SM00082">
    <property type="entry name" value="LRRCT"/>
    <property type="match status" value="1"/>
</dbReference>
<dbReference type="SUPFAM" id="SSF52058">
    <property type="entry name" value="L domain-like"/>
    <property type="match status" value="1"/>
</dbReference>
<dbReference type="PROSITE" id="PS50912">
    <property type="entry name" value="EAR"/>
    <property type="match status" value="7"/>
</dbReference>
<sequence length="557" mass="63644">MESESSRRMGNACIPLKRIAYFLCLFSVVLLTEGKKPAKPKCPAVCTCSKDNALCENARSIPRTVPPDVISLSFVRSGFTEISEGSFLFTPSLQLLLFTSNSFDVISDDAFIGLPHLEYLFIENNNIKSISRHTFRGLKSLIHLSLANNNLQTLPKDIFKGLDSLTNVDLRGNAFNCDCKLKWLVEWLGHTNATVEDIYCEGPPEYKKRKINSLSPKDFDCIITEFAKSQDLPYQSLSIDTFSYLNDEYVVIAQPFTGKCIFLEWDHVEKTFRNYDNITGTSTVVCKPIVIDTQLYVIVAQLFGGSHIYKRDGFANKFIKIQDIEVLKIRKPNDIETFKIEDNWYFVVADSSKAGFTTIYKWNGNGFYSHQSLHAWYRDTDVEYLEIARPPLALRTPHLILSSSSQRPVIYQWSKATQLFTNQTDIPNMEDVYAVKHFSVKGDVYICLTRFIGDSKVMKWGGSSFQDIQRMPSRGSMVFQPLQINNYQYAILGSDYSFTQVYNWDAEKAKFVKFQELNVQAPRSFTHVSINKRNFLFASSFKGNTQIYKHVIVDLSA</sequence>
<evidence type="ECO:0000250" key="1"/>
<evidence type="ECO:0000250" key="2">
    <source>
        <dbReference type="UniProtKB" id="O95970"/>
    </source>
</evidence>
<evidence type="ECO:0000250" key="3">
    <source>
        <dbReference type="UniProtKB" id="Q8K4Y5"/>
    </source>
</evidence>
<evidence type="ECO:0000255" key="4"/>
<evidence type="ECO:0000255" key="5">
    <source>
        <dbReference type="PROSITE-ProRule" id="PRU00075"/>
    </source>
</evidence>
<evidence type="ECO:0000269" key="6">
    <source>
    </source>
</evidence>
<evidence type="ECO:0000269" key="7">
    <source>
    </source>
</evidence>
<evidence type="ECO:0000269" key="8">
    <source>
    </source>
</evidence>
<evidence type="ECO:0000269" key="9">
    <source>
    </source>
</evidence>
<evidence type="ECO:0000269" key="10">
    <source>
    </source>
</evidence>
<evidence type="ECO:0000312" key="11">
    <source>
        <dbReference type="MGI" id="MGI:1861691"/>
    </source>
</evidence>
<evidence type="ECO:0000312" key="12">
    <source>
        <dbReference type="Proteomes" id="UP000000589"/>
    </source>
</evidence>
<evidence type="ECO:0007829" key="13">
    <source>
        <dbReference type="PDB" id="8HPW"/>
    </source>
</evidence>
<organism>
    <name type="scientific">Mus musculus</name>
    <name type="common">Mouse</name>
    <dbReference type="NCBI Taxonomy" id="10090"/>
    <lineage>
        <taxon>Eukaryota</taxon>
        <taxon>Metazoa</taxon>
        <taxon>Chordata</taxon>
        <taxon>Craniata</taxon>
        <taxon>Vertebrata</taxon>
        <taxon>Euteleostomi</taxon>
        <taxon>Mammalia</taxon>
        <taxon>Eutheria</taxon>
        <taxon>Euarchontoglires</taxon>
        <taxon>Glires</taxon>
        <taxon>Rodentia</taxon>
        <taxon>Myomorpha</taxon>
        <taxon>Muroidea</taxon>
        <taxon>Muridae</taxon>
        <taxon>Murinae</taxon>
        <taxon>Mus</taxon>
        <taxon>Mus</taxon>
    </lineage>
</organism>
<keyword id="KW-0002">3D-structure</keyword>
<keyword id="KW-0025">Alternative splicing</keyword>
<keyword id="KW-0963">Cytoplasm</keyword>
<keyword id="KW-0903">Direct protein sequencing</keyword>
<keyword id="KW-0256">Endoplasmic reticulum</keyword>
<keyword id="KW-0325">Glycoprotein</keyword>
<keyword id="KW-0333">Golgi apparatus</keyword>
<keyword id="KW-0433">Leucine-rich repeat</keyword>
<keyword id="KW-1185">Reference proteome</keyword>
<keyword id="KW-0677">Repeat</keyword>
<keyword id="KW-0964">Secreted</keyword>
<keyword id="KW-0732">Signal</keyword>
<keyword id="KW-0770">Synapse</keyword>
<accession>Q9JIA1</accession>
<accession>A0A0G2JFT0</accession>
<protein>
    <recommendedName>
        <fullName>Leucine-rich glioma-inactivated protein 1</fullName>
    </recommendedName>
</protein>